<gene>
    <name type="primary">TMEM161A</name>
    <name type="ORF">UNQ582/PRO1152</name>
</gene>
<protein>
    <recommendedName>
        <fullName>Transmembrane protein 161A</fullName>
    </recommendedName>
    <alternativeName>
        <fullName>Adaptive response to oxidative stress protein 29</fullName>
        <shortName>AROS-29</shortName>
    </alternativeName>
</protein>
<sequence length="479" mass="53602">MAVLGVQLVVTLLTATLMHRLAPHCSFARWLLCNGSLFRYKHPSEEELRALAGKPRPRGRKERWANGLSEEKPLSVPRDAPFQLETCPLTTVDALVLRFFLEYQWFVDFAVYSGGVYLFTEAYYYMLGPAKETNIAVFWCLLTVTFSIKMFLTVTRLYFSAEEGGERSVCLTFAFLFLLLAMLVQVVREETLELGLEPGLASMTQNLEPLLKKQGWDWALPVAKLAIRVGLAVVGSVLGAFLTFPGLRLAQTHRDALTMSEDRPMLQFLLHTSFLSPLFILWLWTKPIARDFLHQPPFGETRFSLLSDSAFDSGRLWLLVVLCLLRLAVTRPHLQAYLCLAKARVEQLRREAGRIEAREIQQRVVRVYCYVTVVSLQYLTPLILTLNCTLLLKTLGGYSWGLGPAPLLSPDPSSASAAPIGSGEDEVQQTAARIAGALGGLLTPLFLRGVLAYLIWWTAACQLLASLFGLYFHQHLAGS</sequence>
<organism>
    <name type="scientific">Homo sapiens</name>
    <name type="common">Human</name>
    <dbReference type="NCBI Taxonomy" id="9606"/>
    <lineage>
        <taxon>Eukaryota</taxon>
        <taxon>Metazoa</taxon>
        <taxon>Chordata</taxon>
        <taxon>Craniata</taxon>
        <taxon>Vertebrata</taxon>
        <taxon>Euteleostomi</taxon>
        <taxon>Mammalia</taxon>
        <taxon>Eutheria</taxon>
        <taxon>Euarchontoglires</taxon>
        <taxon>Primates</taxon>
        <taxon>Haplorrhini</taxon>
        <taxon>Catarrhini</taxon>
        <taxon>Hominidae</taxon>
        <taxon>Homo</taxon>
    </lineage>
</organism>
<feature type="signal peptide" evidence="1">
    <location>
        <begin position="1"/>
        <end position="28"/>
    </location>
</feature>
<feature type="chain" id="PRO_0000288084" description="Transmembrane protein 161A">
    <location>
        <begin position="29"/>
        <end position="479"/>
    </location>
</feature>
<feature type="topological domain" description="Extracellular" evidence="1">
    <location>
        <begin position="29"/>
        <end position="98"/>
    </location>
</feature>
<feature type="transmembrane region" description="Helical" evidence="1">
    <location>
        <begin position="99"/>
        <end position="119"/>
    </location>
</feature>
<feature type="topological domain" description="Cytoplasmic" evidence="1">
    <location>
        <begin position="120"/>
        <end position="134"/>
    </location>
</feature>
<feature type="transmembrane region" description="Helical" evidence="1">
    <location>
        <begin position="135"/>
        <end position="155"/>
    </location>
</feature>
<feature type="topological domain" description="Extracellular" evidence="1">
    <location>
        <begin position="156"/>
        <end position="166"/>
    </location>
</feature>
<feature type="transmembrane region" description="Helical" evidence="1">
    <location>
        <begin position="167"/>
        <end position="187"/>
    </location>
</feature>
<feature type="topological domain" description="Cytoplasmic" evidence="1">
    <location>
        <begin position="188"/>
        <end position="224"/>
    </location>
</feature>
<feature type="transmembrane region" description="Helical" evidence="1">
    <location>
        <begin position="225"/>
        <end position="245"/>
    </location>
</feature>
<feature type="topological domain" description="Extracellular" evidence="1">
    <location>
        <begin position="246"/>
        <end position="263"/>
    </location>
</feature>
<feature type="transmembrane region" description="Helical" evidence="1">
    <location>
        <begin position="264"/>
        <end position="284"/>
    </location>
</feature>
<feature type="topological domain" description="Cytoplasmic" evidence="1">
    <location>
        <begin position="285"/>
        <end position="304"/>
    </location>
</feature>
<feature type="transmembrane region" description="Helical" evidence="1">
    <location>
        <begin position="305"/>
        <end position="325"/>
    </location>
</feature>
<feature type="topological domain" description="Extracellular" evidence="1">
    <location>
        <begin position="326"/>
        <end position="370"/>
    </location>
</feature>
<feature type="transmembrane region" description="Helical" evidence="1">
    <location>
        <begin position="371"/>
        <end position="391"/>
    </location>
</feature>
<feature type="topological domain" description="Cytoplasmic" evidence="1">
    <location>
        <begin position="392"/>
        <end position="449"/>
    </location>
</feature>
<feature type="transmembrane region" description="Helical" evidence="1">
    <location>
        <begin position="450"/>
        <end position="470"/>
    </location>
</feature>
<feature type="topological domain" description="Extracellular" evidence="1">
    <location>
        <begin position="471"/>
        <end position="479"/>
    </location>
</feature>
<feature type="modified residue" description="Phosphoserine" evidence="6">
    <location>
        <position position="69"/>
    </location>
</feature>
<feature type="glycosylation site" description="N-linked (GlcNAc...) asparagine" evidence="1">
    <location>
        <position position="34"/>
    </location>
</feature>
<feature type="splice variant" id="VSP_046042" description="In isoform 2." evidence="4">
    <location>
        <begin position="96"/>
        <end position="198"/>
    </location>
</feature>
<feature type="sequence variant" id="VAR_036537" description="In a breast cancer sample; somatic mutation." evidence="3">
    <original>E</original>
    <variation>V</variation>
    <location>
        <position position="85"/>
    </location>
</feature>
<feature type="sequence conflict" description="In Ref. 2; BAG53402." evidence="5" ref="2">
    <original>I</original>
    <variation>V</variation>
    <location>
        <position position="455"/>
    </location>
</feature>
<comment type="function">
    <text evidence="2">May play a role in protection against oxidative stress. Overexpression leads to reduced levels of oxidant-induced DNA damage and apoptosis.</text>
</comment>
<comment type="interaction">
    <interactant intactId="EBI-6138599">
        <id>Q9NX61</id>
    </interactant>
    <interactant intactId="EBI-15639515">
        <id>O15354</id>
        <label>GPR37</label>
    </interactant>
    <organismsDiffer>false</organismsDiffer>
    <experiments>2</experiments>
</comment>
<comment type="subcellular location">
    <subcellularLocation>
        <location evidence="5">Membrane</location>
        <topology evidence="5">Multi-pass membrane protein</topology>
    </subcellularLocation>
</comment>
<comment type="alternative products">
    <event type="alternative splicing"/>
    <isoform>
        <id>Q9NX61-1</id>
        <name>1</name>
        <sequence type="displayed"/>
    </isoform>
    <isoform>
        <id>Q9NX61-2</id>
        <name>2</name>
        <sequence type="described" ref="VSP_046042"/>
    </isoform>
</comment>
<comment type="induction">
    <text evidence="2">Up-regulated in cells which display transient adaptation to mild oxidative stress by treatment with diethylmaleate, a glutathione-depleting agent. Also induced by retinoic acid.</text>
</comment>
<comment type="similarity">
    <text evidence="5">Belongs to the TMEM161 family.</text>
</comment>
<reference key="1">
    <citation type="journal article" date="2003" name="Genome Res.">
        <title>The secreted protein discovery initiative (SPDI), a large-scale effort to identify novel human secreted and transmembrane proteins: a bioinformatics assessment.</title>
        <authorList>
            <person name="Clark H.F."/>
            <person name="Gurney A.L."/>
            <person name="Abaya E."/>
            <person name="Baker K."/>
            <person name="Baldwin D.T."/>
            <person name="Brush J."/>
            <person name="Chen J."/>
            <person name="Chow B."/>
            <person name="Chui C."/>
            <person name="Crowley C."/>
            <person name="Currell B."/>
            <person name="Deuel B."/>
            <person name="Dowd P."/>
            <person name="Eaton D."/>
            <person name="Foster J.S."/>
            <person name="Grimaldi C."/>
            <person name="Gu Q."/>
            <person name="Hass P.E."/>
            <person name="Heldens S."/>
            <person name="Huang A."/>
            <person name="Kim H.S."/>
            <person name="Klimowski L."/>
            <person name="Jin Y."/>
            <person name="Johnson S."/>
            <person name="Lee J."/>
            <person name="Lewis L."/>
            <person name="Liao D."/>
            <person name="Mark M.R."/>
            <person name="Robbie E."/>
            <person name="Sanchez C."/>
            <person name="Schoenfeld J."/>
            <person name="Seshagiri S."/>
            <person name="Simmons L."/>
            <person name="Singh J."/>
            <person name="Smith V."/>
            <person name="Stinson J."/>
            <person name="Vagts A."/>
            <person name="Vandlen R.L."/>
            <person name="Watanabe C."/>
            <person name="Wieand D."/>
            <person name="Woods K."/>
            <person name="Xie M.-H."/>
            <person name="Yansura D.G."/>
            <person name="Yi S."/>
            <person name="Yu G."/>
            <person name="Yuan J."/>
            <person name="Zhang M."/>
            <person name="Zhang Z."/>
            <person name="Goddard A.D."/>
            <person name="Wood W.I."/>
            <person name="Godowski P.J."/>
            <person name="Gray A.M."/>
        </authorList>
    </citation>
    <scope>NUCLEOTIDE SEQUENCE [LARGE SCALE MRNA] (ISOFORM 1)</scope>
</reference>
<reference key="2">
    <citation type="journal article" date="2004" name="Nat. Genet.">
        <title>Complete sequencing and characterization of 21,243 full-length human cDNAs.</title>
        <authorList>
            <person name="Ota T."/>
            <person name="Suzuki Y."/>
            <person name="Nishikawa T."/>
            <person name="Otsuki T."/>
            <person name="Sugiyama T."/>
            <person name="Irie R."/>
            <person name="Wakamatsu A."/>
            <person name="Hayashi K."/>
            <person name="Sato H."/>
            <person name="Nagai K."/>
            <person name="Kimura K."/>
            <person name="Makita H."/>
            <person name="Sekine M."/>
            <person name="Obayashi M."/>
            <person name="Nishi T."/>
            <person name="Shibahara T."/>
            <person name="Tanaka T."/>
            <person name="Ishii S."/>
            <person name="Yamamoto J."/>
            <person name="Saito K."/>
            <person name="Kawai Y."/>
            <person name="Isono Y."/>
            <person name="Nakamura Y."/>
            <person name="Nagahari K."/>
            <person name="Murakami K."/>
            <person name="Yasuda T."/>
            <person name="Iwayanagi T."/>
            <person name="Wagatsuma M."/>
            <person name="Shiratori A."/>
            <person name="Sudo H."/>
            <person name="Hosoiri T."/>
            <person name="Kaku Y."/>
            <person name="Kodaira H."/>
            <person name="Kondo H."/>
            <person name="Sugawara M."/>
            <person name="Takahashi M."/>
            <person name="Kanda K."/>
            <person name="Yokoi T."/>
            <person name="Furuya T."/>
            <person name="Kikkawa E."/>
            <person name="Omura Y."/>
            <person name="Abe K."/>
            <person name="Kamihara K."/>
            <person name="Katsuta N."/>
            <person name="Sato K."/>
            <person name="Tanikawa M."/>
            <person name="Yamazaki M."/>
            <person name="Ninomiya K."/>
            <person name="Ishibashi T."/>
            <person name="Yamashita H."/>
            <person name="Murakawa K."/>
            <person name="Fujimori K."/>
            <person name="Tanai H."/>
            <person name="Kimata M."/>
            <person name="Watanabe M."/>
            <person name="Hiraoka S."/>
            <person name="Chiba Y."/>
            <person name="Ishida S."/>
            <person name="Ono Y."/>
            <person name="Takiguchi S."/>
            <person name="Watanabe S."/>
            <person name="Yosida M."/>
            <person name="Hotuta T."/>
            <person name="Kusano J."/>
            <person name="Kanehori K."/>
            <person name="Takahashi-Fujii A."/>
            <person name="Hara H."/>
            <person name="Tanase T.-O."/>
            <person name="Nomura Y."/>
            <person name="Togiya S."/>
            <person name="Komai F."/>
            <person name="Hara R."/>
            <person name="Takeuchi K."/>
            <person name="Arita M."/>
            <person name="Imose N."/>
            <person name="Musashino K."/>
            <person name="Yuuki H."/>
            <person name="Oshima A."/>
            <person name="Sasaki N."/>
            <person name="Aotsuka S."/>
            <person name="Yoshikawa Y."/>
            <person name="Matsunawa H."/>
            <person name="Ichihara T."/>
            <person name="Shiohata N."/>
            <person name="Sano S."/>
            <person name="Moriya S."/>
            <person name="Momiyama H."/>
            <person name="Satoh N."/>
            <person name="Takami S."/>
            <person name="Terashima Y."/>
            <person name="Suzuki O."/>
            <person name="Nakagawa S."/>
            <person name="Senoh A."/>
            <person name="Mizoguchi H."/>
            <person name="Goto Y."/>
            <person name="Shimizu F."/>
            <person name="Wakebe H."/>
            <person name="Hishigaki H."/>
            <person name="Watanabe T."/>
            <person name="Sugiyama A."/>
            <person name="Takemoto M."/>
            <person name="Kawakami B."/>
            <person name="Yamazaki M."/>
            <person name="Watanabe K."/>
            <person name="Kumagai A."/>
            <person name="Itakura S."/>
            <person name="Fukuzumi Y."/>
            <person name="Fujimori Y."/>
            <person name="Komiyama M."/>
            <person name="Tashiro H."/>
            <person name="Tanigami A."/>
            <person name="Fujiwara T."/>
            <person name="Ono T."/>
            <person name="Yamada K."/>
            <person name="Fujii Y."/>
            <person name="Ozaki K."/>
            <person name="Hirao M."/>
            <person name="Ohmori Y."/>
            <person name="Kawabata A."/>
            <person name="Hikiji T."/>
            <person name="Kobatake N."/>
            <person name="Inagaki H."/>
            <person name="Ikema Y."/>
            <person name="Okamoto S."/>
            <person name="Okitani R."/>
            <person name="Kawakami T."/>
            <person name="Noguchi S."/>
            <person name="Itoh T."/>
            <person name="Shigeta K."/>
            <person name="Senba T."/>
            <person name="Matsumura K."/>
            <person name="Nakajima Y."/>
            <person name="Mizuno T."/>
            <person name="Morinaga M."/>
            <person name="Sasaki M."/>
            <person name="Togashi T."/>
            <person name="Oyama M."/>
            <person name="Hata H."/>
            <person name="Watanabe M."/>
            <person name="Komatsu T."/>
            <person name="Mizushima-Sugano J."/>
            <person name="Satoh T."/>
            <person name="Shirai Y."/>
            <person name="Takahashi Y."/>
            <person name="Nakagawa K."/>
            <person name="Okumura K."/>
            <person name="Nagase T."/>
            <person name="Nomura N."/>
            <person name="Kikuchi H."/>
            <person name="Masuho Y."/>
            <person name="Yamashita R."/>
            <person name="Nakai K."/>
            <person name="Yada T."/>
            <person name="Nakamura Y."/>
            <person name="Ohara O."/>
            <person name="Isogai T."/>
            <person name="Sugano S."/>
        </authorList>
    </citation>
    <scope>NUCLEOTIDE SEQUENCE [LARGE SCALE MRNA] (ISOFORMS 1 AND 2)</scope>
    <source>
        <tissue>Signet-ring cell carcinoma</tissue>
        <tissue>Small intestine</tissue>
    </source>
</reference>
<reference key="3">
    <citation type="journal article" date="2004" name="Nature">
        <title>The DNA sequence and biology of human chromosome 19.</title>
        <authorList>
            <person name="Grimwood J."/>
            <person name="Gordon L.A."/>
            <person name="Olsen A.S."/>
            <person name="Terry A."/>
            <person name="Schmutz J."/>
            <person name="Lamerdin J.E."/>
            <person name="Hellsten U."/>
            <person name="Goodstein D."/>
            <person name="Couronne O."/>
            <person name="Tran-Gyamfi M."/>
            <person name="Aerts A."/>
            <person name="Altherr M."/>
            <person name="Ashworth L."/>
            <person name="Bajorek E."/>
            <person name="Black S."/>
            <person name="Branscomb E."/>
            <person name="Caenepeel S."/>
            <person name="Carrano A.V."/>
            <person name="Caoile C."/>
            <person name="Chan Y.M."/>
            <person name="Christensen M."/>
            <person name="Cleland C.A."/>
            <person name="Copeland A."/>
            <person name="Dalin E."/>
            <person name="Dehal P."/>
            <person name="Denys M."/>
            <person name="Detter J.C."/>
            <person name="Escobar J."/>
            <person name="Flowers D."/>
            <person name="Fotopulos D."/>
            <person name="Garcia C."/>
            <person name="Georgescu A.M."/>
            <person name="Glavina T."/>
            <person name="Gomez M."/>
            <person name="Gonzales E."/>
            <person name="Groza M."/>
            <person name="Hammon N."/>
            <person name="Hawkins T."/>
            <person name="Haydu L."/>
            <person name="Ho I."/>
            <person name="Huang W."/>
            <person name="Israni S."/>
            <person name="Jett J."/>
            <person name="Kadner K."/>
            <person name="Kimball H."/>
            <person name="Kobayashi A."/>
            <person name="Larionov V."/>
            <person name="Leem S.-H."/>
            <person name="Lopez F."/>
            <person name="Lou Y."/>
            <person name="Lowry S."/>
            <person name="Malfatti S."/>
            <person name="Martinez D."/>
            <person name="McCready P.M."/>
            <person name="Medina C."/>
            <person name="Morgan J."/>
            <person name="Nelson K."/>
            <person name="Nolan M."/>
            <person name="Ovcharenko I."/>
            <person name="Pitluck S."/>
            <person name="Pollard M."/>
            <person name="Popkie A.P."/>
            <person name="Predki P."/>
            <person name="Quan G."/>
            <person name="Ramirez L."/>
            <person name="Rash S."/>
            <person name="Retterer J."/>
            <person name="Rodriguez A."/>
            <person name="Rogers S."/>
            <person name="Salamov A."/>
            <person name="Salazar A."/>
            <person name="She X."/>
            <person name="Smith D."/>
            <person name="Slezak T."/>
            <person name="Solovyev V."/>
            <person name="Thayer N."/>
            <person name="Tice H."/>
            <person name="Tsai M."/>
            <person name="Ustaszewska A."/>
            <person name="Vo N."/>
            <person name="Wagner M."/>
            <person name="Wheeler J."/>
            <person name="Wu K."/>
            <person name="Xie G."/>
            <person name="Yang J."/>
            <person name="Dubchak I."/>
            <person name="Furey T.S."/>
            <person name="DeJong P."/>
            <person name="Dickson M."/>
            <person name="Gordon D."/>
            <person name="Eichler E.E."/>
            <person name="Pennacchio L.A."/>
            <person name="Richardson P."/>
            <person name="Stubbs L."/>
            <person name="Rokhsar D.S."/>
            <person name="Myers R.M."/>
            <person name="Rubin E.M."/>
            <person name="Lucas S.M."/>
        </authorList>
    </citation>
    <scope>NUCLEOTIDE SEQUENCE [LARGE SCALE GENOMIC DNA]</scope>
</reference>
<reference key="4">
    <citation type="submission" date="2005-07" db="EMBL/GenBank/DDBJ databases">
        <authorList>
            <person name="Mural R.J."/>
            <person name="Istrail S."/>
            <person name="Sutton G."/>
            <person name="Florea L."/>
            <person name="Halpern A.L."/>
            <person name="Mobarry C.M."/>
            <person name="Lippert R."/>
            <person name="Walenz B."/>
            <person name="Shatkay H."/>
            <person name="Dew I."/>
            <person name="Miller J.R."/>
            <person name="Flanigan M.J."/>
            <person name="Edwards N.J."/>
            <person name="Bolanos R."/>
            <person name="Fasulo D."/>
            <person name="Halldorsson B.V."/>
            <person name="Hannenhalli S."/>
            <person name="Turner R."/>
            <person name="Yooseph S."/>
            <person name="Lu F."/>
            <person name="Nusskern D.R."/>
            <person name="Shue B.C."/>
            <person name="Zheng X.H."/>
            <person name="Zhong F."/>
            <person name="Delcher A.L."/>
            <person name="Huson D.H."/>
            <person name="Kravitz S.A."/>
            <person name="Mouchard L."/>
            <person name="Reinert K."/>
            <person name="Remington K.A."/>
            <person name="Clark A.G."/>
            <person name="Waterman M.S."/>
            <person name="Eichler E.E."/>
            <person name="Adams M.D."/>
            <person name="Hunkapiller M.W."/>
            <person name="Myers E.W."/>
            <person name="Venter J.C."/>
        </authorList>
    </citation>
    <scope>NUCLEOTIDE SEQUENCE [LARGE SCALE GENOMIC DNA]</scope>
</reference>
<reference key="5">
    <citation type="journal article" date="2004" name="Genome Res.">
        <title>The status, quality, and expansion of the NIH full-length cDNA project: the Mammalian Gene Collection (MGC).</title>
        <authorList>
            <consortium name="The MGC Project Team"/>
        </authorList>
    </citation>
    <scope>NUCLEOTIDE SEQUENCE [LARGE SCALE MRNA] (ISOFORM 1)</scope>
    <source>
        <tissue>Kidney</tissue>
        <tissue>Skin</tissue>
    </source>
</reference>
<reference key="6">
    <citation type="journal article" date="2013" name="J. Proteome Res.">
        <title>Toward a comprehensive characterization of a human cancer cell phosphoproteome.</title>
        <authorList>
            <person name="Zhou H."/>
            <person name="Di Palma S."/>
            <person name="Preisinger C."/>
            <person name="Peng M."/>
            <person name="Polat A.N."/>
            <person name="Heck A.J."/>
            <person name="Mohammed S."/>
        </authorList>
    </citation>
    <scope>PHOSPHORYLATION [LARGE SCALE ANALYSIS] AT SER-69</scope>
    <scope>IDENTIFICATION BY MASS SPECTROMETRY [LARGE SCALE ANALYSIS]</scope>
    <source>
        <tissue>Erythroleukemia</tissue>
    </source>
</reference>
<reference key="7">
    <citation type="journal article" date="2006" name="Science">
        <title>The consensus coding sequences of human breast and colorectal cancers.</title>
        <authorList>
            <person name="Sjoeblom T."/>
            <person name="Jones S."/>
            <person name="Wood L.D."/>
            <person name="Parsons D.W."/>
            <person name="Lin J."/>
            <person name="Barber T.D."/>
            <person name="Mandelker D."/>
            <person name="Leary R.J."/>
            <person name="Ptak J."/>
            <person name="Silliman N."/>
            <person name="Szabo S."/>
            <person name="Buckhaults P."/>
            <person name="Farrell C."/>
            <person name="Meeh P."/>
            <person name="Markowitz S.D."/>
            <person name="Willis J."/>
            <person name="Dawson D."/>
            <person name="Willson J.K.V."/>
            <person name="Gazdar A.F."/>
            <person name="Hartigan J."/>
            <person name="Wu L."/>
            <person name="Liu C."/>
            <person name="Parmigiani G."/>
            <person name="Park B.H."/>
            <person name="Bachman K.E."/>
            <person name="Papadopoulos N."/>
            <person name="Vogelstein B."/>
            <person name="Kinzler K.W."/>
            <person name="Velculescu V.E."/>
        </authorList>
    </citation>
    <scope>VARIANT [LARGE SCALE ANALYSIS] VAL-85</scope>
</reference>
<reference key="8">
    <citation type="journal article" date="2006" name="Free Radic. Res.">
        <title>AROS-29 is involved in adaptive response to oxidative stress.</title>
        <authorList>
            <person name="Montesano Gesualdi N."/>
            <person name="Chirico G."/>
            <person name="Catanese M.T."/>
            <person name="Pirozzi G."/>
            <person name="Esposito F."/>
        </authorList>
    </citation>
    <scope>FUNCTION</scope>
    <scope>INDUCTION</scope>
</reference>
<proteinExistence type="evidence at protein level"/>
<name>T161A_HUMAN</name>
<accession>Q9NX61</accession>
<accession>B3KUE0</accession>
<accession>G5E9M6</accession>
<accession>Q7L2Y1</accession>
<evidence type="ECO:0000255" key="1"/>
<evidence type="ECO:0000269" key="2">
    <source>
    </source>
</evidence>
<evidence type="ECO:0000269" key="3">
    <source>
    </source>
</evidence>
<evidence type="ECO:0000303" key="4">
    <source>
    </source>
</evidence>
<evidence type="ECO:0000305" key="5"/>
<evidence type="ECO:0007744" key="6">
    <source>
    </source>
</evidence>
<dbReference type="EMBL" id="AY358088">
    <property type="protein sequence ID" value="AAQ88455.1"/>
    <property type="molecule type" value="mRNA"/>
</dbReference>
<dbReference type="EMBL" id="AK000429">
    <property type="protein sequence ID" value="BAA91159.1"/>
    <property type="molecule type" value="mRNA"/>
</dbReference>
<dbReference type="EMBL" id="AK096964">
    <property type="protein sequence ID" value="BAG53402.1"/>
    <property type="molecule type" value="mRNA"/>
</dbReference>
<dbReference type="EMBL" id="AC002126">
    <property type="status" value="NOT_ANNOTATED_CDS"/>
    <property type="molecule type" value="Genomic_DNA"/>
</dbReference>
<dbReference type="EMBL" id="CH471106">
    <property type="protein sequence ID" value="EAW84787.1"/>
    <property type="molecule type" value="Genomic_DNA"/>
</dbReference>
<dbReference type="EMBL" id="BC005210">
    <property type="protein sequence ID" value="AAH05210.1"/>
    <property type="molecule type" value="mRNA"/>
</dbReference>
<dbReference type="EMBL" id="BC016478">
    <property type="protein sequence ID" value="AAH16478.2"/>
    <property type="molecule type" value="mRNA"/>
</dbReference>
<dbReference type="CCDS" id="CCDS12393.1">
    <molecule id="Q9NX61-1"/>
</dbReference>
<dbReference type="CCDS" id="CCDS58656.1">
    <molecule id="Q9NX61-2"/>
</dbReference>
<dbReference type="RefSeq" id="NP_001243695.1">
    <molecule id="Q9NX61-2"/>
    <property type="nucleotide sequence ID" value="NM_001256766.3"/>
</dbReference>
<dbReference type="RefSeq" id="NP_060284.1">
    <molecule id="Q9NX61-1"/>
    <property type="nucleotide sequence ID" value="NM_017814.3"/>
</dbReference>
<dbReference type="BioGRID" id="120269">
    <property type="interactions" value="112"/>
</dbReference>
<dbReference type="FunCoup" id="Q9NX61">
    <property type="interactions" value="599"/>
</dbReference>
<dbReference type="IntAct" id="Q9NX61">
    <property type="interactions" value="63"/>
</dbReference>
<dbReference type="MINT" id="Q9NX61"/>
<dbReference type="STRING" id="9606.ENSP00000162044"/>
<dbReference type="GlyCosmos" id="Q9NX61">
    <property type="glycosylation" value="2 sites, 1 glycan"/>
</dbReference>
<dbReference type="GlyGen" id="Q9NX61">
    <property type="glycosylation" value="2 sites, 1 O-linked glycan (1 site)"/>
</dbReference>
<dbReference type="iPTMnet" id="Q9NX61"/>
<dbReference type="PhosphoSitePlus" id="Q9NX61"/>
<dbReference type="SwissPalm" id="Q9NX61"/>
<dbReference type="BioMuta" id="TMEM161A"/>
<dbReference type="DMDM" id="74734686"/>
<dbReference type="jPOST" id="Q9NX61"/>
<dbReference type="MassIVE" id="Q9NX61"/>
<dbReference type="PaxDb" id="9606-ENSP00000162044"/>
<dbReference type="PeptideAtlas" id="Q9NX61"/>
<dbReference type="ProteomicsDB" id="33985"/>
<dbReference type="ProteomicsDB" id="83046">
    <molecule id="Q9NX61-1"/>
</dbReference>
<dbReference type="Pumba" id="Q9NX61"/>
<dbReference type="Antibodypedia" id="43982">
    <property type="antibodies" value="143 antibodies from 21 providers"/>
</dbReference>
<dbReference type="DNASU" id="54929"/>
<dbReference type="Ensembl" id="ENST00000162044.14">
    <molecule id="Q9NX61-1"/>
    <property type="protein sequence ID" value="ENSP00000162044.7"/>
    <property type="gene ID" value="ENSG00000064545.15"/>
</dbReference>
<dbReference type="Ensembl" id="ENST00000450333.6">
    <molecule id="Q9NX61-2"/>
    <property type="protein sequence ID" value="ENSP00000404208.2"/>
    <property type="gene ID" value="ENSG00000064545.15"/>
</dbReference>
<dbReference type="GeneID" id="54929"/>
<dbReference type="KEGG" id="hsa:54929"/>
<dbReference type="MANE-Select" id="ENST00000162044.14">
    <property type="protein sequence ID" value="ENSP00000162044.7"/>
    <property type="RefSeq nucleotide sequence ID" value="NM_017814.3"/>
    <property type="RefSeq protein sequence ID" value="NP_060284.1"/>
</dbReference>
<dbReference type="UCSC" id="uc002nlg.5">
    <molecule id="Q9NX61-1"/>
    <property type="organism name" value="human"/>
</dbReference>
<dbReference type="AGR" id="HGNC:26020"/>
<dbReference type="CTD" id="54929"/>
<dbReference type="GeneCards" id="TMEM161A"/>
<dbReference type="HGNC" id="HGNC:26020">
    <property type="gene designation" value="TMEM161A"/>
</dbReference>
<dbReference type="HPA" id="ENSG00000064545">
    <property type="expression patterns" value="Low tissue specificity"/>
</dbReference>
<dbReference type="MIM" id="618966">
    <property type="type" value="gene"/>
</dbReference>
<dbReference type="neXtProt" id="NX_Q9NX61"/>
<dbReference type="OpenTargets" id="ENSG00000064545"/>
<dbReference type="PharmGKB" id="PA145147959"/>
<dbReference type="VEuPathDB" id="HostDB:ENSG00000064545"/>
<dbReference type="eggNOG" id="KOG3978">
    <property type="taxonomic scope" value="Eukaryota"/>
</dbReference>
<dbReference type="GeneTree" id="ENSGT00390000000672"/>
<dbReference type="HOGENOM" id="CLU_027277_0_0_1"/>
<dbReference type="InParanoid" id="Q9NX61"/>
<dbReference type="OMA" id="VIVVLMW"/>
<dbReference type="OrthoDB" id="784140at2759"/>
<dbReference type="PAN-GO" id="Q9NX61">
    <property type="GO annotations" value="0 GO annotations based on evolutionary models"/>
</dbReference>
<dbReference type="PhylomeDB" id="Q9NX61"/>
<dbReference type="TreeFam" id="TF314570"/>
<dbReference type="PathwayCommons" id="Q9NX61"/>
<dbReference type="SignaLink" id="Q9NX61"/>
<dbReference type="BioGRID-ORCS" id="54929">
    <property type="hits" value="30 hits in 1165 CRISPR screens"/>
</dbReference>
<dbReference type="ChiTaRS" id="TMEM161A">
    <property type="organism name" value="human"/>
</dbReference>
<dbReference type="GenomeRNAi" id="54929"/>
<dbReference type="Pharos" id="Q9NX61">
    <property type="development level" value="Tdark"/>
</dbReference>
<dbReference type="PRO" id="PR:Q9NX61"/>
<dbReference type="Proteomes" id="UP000005640">
    <property type="component" value="Chromosome 19"/>
</dbReference>
<dbReference type="RNAct" id="Q9NX61">
    <property type="molecule type" value="protein"/>
</dbReference>
<dbReference type="Bgee" id="ENSG00000064545">
    <property type="expression patterns" value="Expressed in pancreatic ductal cell and 192 other cell types or tissues"/>
</dbReference>
<dbReference type="ExpressionAtlas" id="Q9NX61">
    <property type="expression patterns" value="baseline and differential"/>
</dbReference>
<dbReference type="GO" id="GO:0016020">
    <property type="term" value="C:membrane"/>
    <property type="evidence" value="ECO:0007669"/>
    <property type="project" value="UniProtKB-SubCell"/>
</dbReference>
<dbReference type="GO" id="GO:0034599">
    <property type="term" value="P:cellular response to oxidative stress"/>
    <property type="evidence" value="ECO:0000314"/>
    <property type="project" value="BHF-UCL"/>
</dbReference>
<dbReference type="GO" id="GO:0034644">
    <property type="term" value="P:cellular response to UV"/>
    <property type="evidence" value="ECO:0000314"/>
    <property type="project" value="BHF-UCL"/>
</dbReference>
<dbReference type="GO" id="GO:1902230">
    <property type="term" value="P:negative regulation of intrinsic apoptotic signaling pathway in response to DNA damage"/>
    <property type="evidence" value="ECO:0000315"/>
    <property type="project" value="BHF-UCL"/>
</dbReference>
<dbReference type="GO" id="GO:0045739">
    <property type="term" value="P:positive regulation of DNA repair"/>
    <property type="evidence" value="ECO:0000315"/>
    <property type="project" value="BHF-UCL"/>
</dbReference>
<dbReference type="GO" id="GO:0032526">
    <property type="term" value="P:response to retinoic acid"/>
    <property type="evidence" value="ECO:0000314"/>
    <property type="project" value="BHF-UCL"/>
</dbReference>
<dbReference type="InterPro" id="IPR019395">
    <property type="entry name" value="Transmembrane_161A/B"/>
</dbReference>
<dbReference type="PANTHER" id="PTHR13624">
    <property type="entry name" value="RE42071P"/>
    <property type="match status" value="1"/>
</dbReference>
<dbReference type="PANTHER" id="PTHR13624:SF4">
    <property type="entry name" value="TRANSMEMBRANE PROTEIN 161A"/>
    <property type="match status" value="1"/>
</dbReference>
<dbReference type="Pfam" id="PF10268">
    <property type="entry name" value="Tmemb_161AB"/>
    <property type="match status" value="1"/>
</dbReference>
<keyword id="KW-0025">Alternative splicing</keyword>
<keyword id="KW-0325">Glycoprotein</keyword>
<keyword id="KW-0472">Membrane</keyword>
<keyword id="KW-0597">Phosphoprotein</keyword>
<keyword id="KW-1267">Proteomics identification</keyword>
<keyword id="KW-1185">Reference proteome</keyword>
<keyword id="KW-0732">Signal</keyword>
<keyword id="KW-0812">Transmembrane</keyword>
<keyword id="KW-1133">Transmembrane helix</keyword>